<feature type="chain" id="PRO_1000056701" description="Protein FdhE">
    <location>
        <begin position="1"/>
        <end position="309"/>
    </location>
</feature>
<name>FDHE_ECOUT</name>
<dbReference type="EMBL" id="CP000243">
    <property type="protein sequence ID" value="ABE09890.1"/>
    <property type="molecule type" value="Genomic_DNA"/>
</dbReference>
<dbReference type="RefSeq" id="WP_000027720.1">
    <property type="nucleotide sequence ID" value="NZ_CP064825.1"/>
</dbReference>
<dbReference type="SMR" id="Q1R424"/>
<dbReference type="KEGG" id="eci:UTI89_C4478"/>
<dbReference type="HOGENOM" id="CLU_055275_0_0_6"/>
<dbReference type="Proteomes" id="UP000001952">
    <property type="component" value="Chromosome"/>
</dbReference>
<dbReference type="GO" id="GO:0005829">
    <property type="term" value="C:cytosol"/>
    <property type="evidence" value="ECO:0007669"/>
    <property type="project" value="TreeGrafter"/>
</dbReference>
<dbReference type="GO" id="GO:0008199">
    <property type="term" value="F:ferric iron binding"/>
    <property type="evidence" value="ECO:0007669"/>
    <property type="project" value="TreeGrafter"/>
</dbReference>
<dbReference type="GO" id="GO:0051604">
    <property type="term" value="P:protein maturation"/>
    <property type="evidence" value="ECO:0007669"/>
    <property type="project" value="TreeGrafter"/>
</dbReference>
<dbReference type="CDD" id="cd16341">
    <property type="entry name" value="FdhE"/>
    <property type="match status" value="1"/>
</dbReference>
<dbReference type="FunFam" id="3.90.1670.10:FF:000001">
    <property type="entry name" value="Protein FdhE"/>
    <property type="match status" value="1"/>
</dbReference>
<dbReference type="Gene3D" id="3.90.1670.10">
    <property type="entry name" value="FdhE-like domain"/>
    <property type="match status" value="1"/>
</dbReference>
<dbReference type="HAMAP" id="MF_00611">
    <property type="entry name" value="FdeH"/>
    <property type="match status" value="1"/>
</dbReference>
<dbReference type="InterPro" id="IPR024064">
    <property type="entry name" value="FdhE-like_sf"/>
</dbReference>
<dbReference type="InterPro" id="IPR056796">
    <property type="entry name" value="FdhE_C"/>
</dbReference>
<dbReference type="InterPro" id="IPR056797">
    <property type="entry name" value="FdhE_central"/>
</dbReference>
<dbReference type="InterPro" id="IPR056774">
    <property type="entry name" value="FdhE_N"/>
</dbReference>
<dbReference type="InterPro" id="IPR006452">
    <property type="entry name" value="Formate_DH_accessory"/>
</dbReference>
<dbReference type="NCBIfam" id="TIGR01562">
    <property type="entry name" value="FdhE"/>
    <property type="match status" value="1"/>
</dbReference>
<dbReference type="NCBIfam" id="NF002925">
    <property type="entry name" value="PRK03564.1"/>
    <property type="match status" value="1"/>
</dbReference>
<dbReference type="PANTHER" id="PTHR37689">
    <property type="entry name" value="PROTEIN FDHE"/>
    <property type="match status" value="1"/>
</dbReference>
<dbReference type="PANTHER" id="PTHR37689:SF1">
    <property type="entry name" value="PROTEIN FDHE"/>
    <property type="match status" value="1"/>
</dbReference>
<dbReference type="Pfam" id="PF24860">
    <property type="entry name" value="FdhE_C"/>
    <property type="match status" value="1"/>
</dbReference>
<dbReference type="Pfam" id="PF24859">
    <property type="entry name" value="FdhE_central"/>
    <property type="match status" value="1"/>
</dbReference>
<dbReference type="Pfam" id="PF04216">
    <property type="entry name" value="FdhE_N"/>
    <property type="match status" value="1"/>
</dbReference>
<dbReference type="PIRSF" id="PIRSF018296">
    <property type="entry name" value="Format_dh_formtn"/>
    <property type="match status" value="1"/>
</dbReference>
<dbReference type="SUPFAM" id="SSF144020">
    <property type="entry name" value="FdhE-like"/>
    <property type="match status" value="1"/>
</dbReference>
<accession>Q1R424</accession>
<proteinExistence type="inferred from homology"/>
<protein>
    <recommendedName>
        <fullName evidence="1">Protein FdhE</fullName>
    </recommendedName>
</protein>
<keyword id="KW-0963">Cytoplasm</keyword>
<comment type="function">
    <text evidence="1">Necessary for formate dehydrogenase activity.</text>
</comment>
<comment type="subcellular location">
    <subcellularLocation>
        <location evidence="1">Cytoplasm</location>
    </subcellularLocation>
</comment>
<comment type="similarity">
    <text evidence="1">Belongs to the FdhE family.</text>
</comment>
<reference key="1">
    <citation type="journal article" date="2006" name="Proc. Natl. Acad. Sci. U.S.A.">
        <title>Identification of genes subject to positive selection in uropathogenic strains of Escherichia coli: a comparative genomics approach.</title>
        <authorList>
            <person name="Chen S.L."/>
            <person name="Hung C.-S."/>
            <person name="Xu J."/>
            <person name="Reigstad C.S."/>
            <person name="Magrini V."/>
            <person name="Sabo A."/>
            <person name="Blasiar D."/>
            <person name="Bieri T."/>
            <person name="Meyer R.R."/>
            <person name="Ozersky P."/>
            <person name="Armstrong J.R."/>
            <person name="Fulton R.S."/>
            <person name="Latreille J.P."/>
            <person name="Spieth J."/>
            <person name="Hooton T.M."/>
            <person name="Mardis E.R."/>
            <person name="Hultgren S.J."/>
            <person name="Gordon J.I."/>
        </authorList>
    </citation>
    <scope>NUCLEOTIDE SEQUENCE [LARGE SCALE GENOMIC DNA]</scope>
    <source>
        <strain>UTI89 / UPEC</strain>
    </source>
</reference>
<gene>
    <name evidence="1" type="primary">fdhE</name>
    <name type="ordered locus">UTI89_C4478</name>
</gene>
<organism>
    <name type="scientific">Escherichia coli (strain UTI89 / UPEC)</name>
    <dbReference type="NCBI Taxonomy" id="364106"/>
    <lineage>
        <taxon>Bacteria</taxon>
        <taxon>Pseudomonadati</taxon>
        <taxon>Pseudomonadota</taxon>
        <taxon>Gammaproteobacteria</taxon>
        <taxon>Enterobacterales</taxon>
        <taxon>Enterobacteriaceae</taxon>
        <taxon>Escherichia</taxon>
    </lineage>
</organism>
<evidence type="ECO:0000255" key="1">
    <source>
        <dbReference type="HAMAP-Rule" id="MF_00611"/>
    </source>
</evidence>
<sequence>MSIRIIPQDELGSSEKRTADMIPPLLFPRLKNLYNRRAERLRELAENNPLGDYLRFAALIAHAQEVVLYDHPLEMDLTTRIKEASAQGKPPLDIHVLPRDKHWQKLLMALIAELKPEMSGPALAVIENLEKASTQELEDMASALFASDFSSVSSDKAPFIWAALSLYWAQMANLIPGKARAEYGEQRQYCPVCGSMPVSSMVQIGTTQGLRYLHCNLCETEWHVVRVKCSNCEQSGKLHYWSLDDEQAAIKAESCDDCGTYLKILYQEKEPKVEAVADDLASLVLDARMEQEGYARSSINPFLFPGEGE</sequence>